<name>RIC8B_RAT</name>
<keyword id="KW-0143">Chaperone</keyword>
<keyword id="KW-0963">Cytoplasm</keyword>
<keyword id="KW-0344">Guanine-nucleotide releasing factor</keyword>
<keyword id="KW-0597">Phosphoprotein</keyword>
<keyword id="KW-1185">Reference proteome</keyword>
<proteinExistence type="evidence at protein level"/>
<dbReference type="EMBL" id="AY177755">
    <property type="protein sequence ID" value="AAO23337.1"/>
    <property type="molecule type" value="mRNA"/>
</dbReference>
<dbReference type="RefSeq" id="NP_783188.1">
    <property type="nucleotide sequence ID" value="NM_175598.2"/>
</dbReference>
<dbReference type="SMR" id="Q80ZG0"/>
<dbReference type="FunCoup" id="Q80ZG0">
    <property type="interactions" value="3378"/>
</dbReference>
<dbReference type="STRING" id="10116.ENSRNOP00000069306"/>
<dbReference type="iPTMnet" id="Q80ZG0"/>
<dbReference type="PhosphoSitePlus" id="Q80ZG0"/>
<dbReference type="PaxDb" id="10116-ENSRNOP00000009625"/>
<dbReference type="Ensembl" id="ENSRNOT00000009625.6">
    <property type="protein sequence ID" value="ENSRNOP00000009625.4"/>
    <property type="gene ID" value="ENSRNOG00000007323.7"/>
</dbReference>
<dbReference type="GeneID" id="314681"/>
<dbReference type="KEGG" id="rno:314681"/>
<dbReference type="UCSC" id="RGD:631419">
    <property type="organism name" value="rat"/>
</dbReference>
<dbReference type="AGR" id="RGD:631419"/>
<dbReference type="CTD" id="55188"/>
<dbReference type="RGD" id="631419">
    <property type="gene designation" value="Ric8b"/>
</dbReference>
<dbReference type="eggNOG" id="KOG4464">
    <property type="taxonomic scope" value="Eukaryota"/>
</dbReference>
<dbReference type="GeneTree" id="ENSGT00390000014700"/>
<dbReference type="InParanoid" id="Q80ZG0"/>
<dbReference type="OrthoDB" id="5585685at2759"/>
<dbReference type="PRO" id="PR:Q80ZG0"/>
<dbReference type="Proteomes" id="UP000002494">
    <property type="component" value="Chromosome 7"/>
</dbReference>
<dbReference type="Bgee" id="ENSRNOG00000007323">
    <property type="expression patterns" value="Expressed in quadriceps femoris and 18 other cell types or tissues"/>
</dbReference>
<dbReference type="ExpressionAtlas" id="Q80ZG0">
    <property type="expression patterns" value="baseline and differential"/>
</dbReference>
<dbReference type="GO" id="GO:0005938">
    <property type="term" value="C:cell cortex"/>
    <property type="evidence" value="ECO:0007669"/>
    <property type="project" value="UniProtKB-SubCell"/>
</dbReference>
<dbReference type="GO" id="GO:0005737">
    <property type="term" value="C:cytoplasm"/>
    <property type="evidence" value="ECO:0000318"/>
    <property type="project" value="GO_Central"/>
</dbReference>
<dbReference type="GO" id="GO:0005829">
    <property type="term" value="C:cytosol"/>
    <property type="evidence" value="ECO:0000266"/>
    <property type="project" value="RGD"/>
</dbReference>
<dbReference type="GO" id="GO:0005886">
    <property type="term" value="C:plasma membrane"/>
    <property type="evidence" value="ECO:0000250"/>
    <property type="project" value="UniProtKB"/>
</dbReference>
<dbReference type="GO" id="GO:0001965">
    <property type="term" value="F:G-protein alpha-subunit binding"/>
    <property type="evidence" value="ECO:0000250"/>
    <property type="project" value="UniProtKB"/>
</dbReference>
<dbReference type="GO" id="GO:0005085">
    <property type="term" value="F:guanyl-nucleotide exchange factor activity"/>
    <property type="evidence" value="ECO:0000250"/>
    <property type="project" value="UniProtKB"/>
</dbReference>
<dbReference type="GO" id="GO:0044183">
    <property type="term" value="F:protein folding chaperone"/>
    <property type="evidence" value="ECO:0000250"/>
    <property type="project" value="UniProtKB"/>
</dbReference>
<dbReference type="GO" id="GO:0007186">
    <property type="term" value="P:G protein-coupled receptor signaling pathway"/>
    <property type="evidence" value="ECO:0000250"/>
    <property type="project" value="UniProtKB"/>
</dbReference>
<dbReference type="GO" id="GO:0008277">
    <property type="term" value="P:regulation of G protein-coupled receptor signaling pathway"/>
    <property type="evidence" value="ECO:0000266"/>
    <property type="project" value="RGD"/>
</dbReference>
<dbReference type="GO" id="GO:0007608">
    <property type="term" value="P:sensory perception of smell"/>
    <property type="evidence" value="ECO:0000250"/>
    <property type="project" value="UniProtKB"/>
</dbReference>
<dbReference type="Gene3D" id="1.25.10.10">
    <property type="entry name" value="Leucine-rich Repeat Variant"/>
    <property type="match status" value="1"/>
</dbReference>
<dbReference type="InterPro" id="IPR011989">
    <property type="entry name" value="ARM-like"/>
</dbReference>
<dbReference type="InterPro" id="IPR016024">
    <property type="entry name" value="ARM-type_fold"/>
</dbReference>
<dbReference type="InterPro" id="IPR008376">
    <property type="entry name" value="Chaperone_Ric-8_A/B"/>
</dbReference>
<dbReference type="InterPro" id="IPR019318">
    <property type="entry name" value="Gua_nucleotide_exch_fac_Ric8"/>
</dbReference>
<dbReference type="PANTHER" id="PTHR12425">
    <property type="entry name" value="SYNEMBRYN"/>
    <property type="match status" value="1"/>
</dbReference>
<dbReference type="PANTHER" id="PTHR12425:SF2">
    <property type="entry name" value="SYNEMBRYN-B"/>
    <property type="match status" value="1"/>
</dbReference>
<dbReference type="Pfam" id="PF10165">
    <property type="entry name" value="Ric8"/>
    <property type="match status" value="1"/>
</dbReference>
<dbReference type="PRINTS" id="PR01802">
    <property type="entry name" value="SYNEMBRYN"/>
</dbReference>
<dbReference type="SUPFAM" id="SSF48371">
    <property type="entry name" value="ARM repeat"/>
    <property type="match status" value="1"/>
</dbReference>
<sequence>MDEERALYIVRAGEAGAIERVLRDYSDKHRATFKFESADEDKRKKLCEGIFKVLVKGVPTTCQVPCLEVLRILSRDKKILAPVTTEENMQILLRLAKLHESDDSLEKVSEFPVIVESLKCLCNIVFNSQVAQQLSLELNLAAKLCNLLRKCKDRKFINDIKCFDLRLLFVLSLLHTDIRSQLRYELQGLPLLTQILESAFSIKWTDEYESAIDHSGPPLSPQETDCAIEALKALFNVTVDSWKVHKESDSHQFRVMAAVLRHCLLIVGPTEDKTEELHSNAVNLLSNVPVSCLDVLICPLTHEETAQEAATLDELPGDKTAEKDTALKSSAMVYNGMNMEAIHVLLSFMEKRIDKGSSYREGLTPVLSLLTECSRAHRNIRKFLKDQVLPPLRDVTNRPEVGSTVRNKLVRLMTHVDLGVKQIAAEFLFVLCKERVDSLLKYTGYGNAAGLLAARGLLAGGRGDNWYSEDEDTDTEEYKNAKPKEELLKPMGLKPDGTITPLEEALSQYSVIEETSSDTD</sequence>
<gene>
    <name type="primary">Ric8b</name>
</gene>
<feature type="chain" id="PRO_0000235901" description="Chaperone Ric-8B">
    <location>
        <begin position="1"/>
        <end position="520"/>
    </location>
</feature>
<feature type="modified residue" description="Phosphoserine" evidence="4">
    <location>
        <position position="468"/>
    </location>
</feature>
<feature type="modified residue" description="Phosphothreonine" evidence="4">
    <location>
        <position position="473"/>
    </location>
</feature>
<organism>
    <name type="scientific">Rattus norvegicus</name>
    <name type="common">Rat</name>
    <dbReference type="NCBI Taxonomy" id="10116"/>
    <lineage>
        <taxon>Eukaryota</taxon>
        <taxon>Metazoa</taxon>
        <taxon>Chordata</taxon>
        <taxon>Craniata</taxon>
        <taxon>Vertebrata</taxon>
        <taxon>Euteleostomi</taxon>
        <taxon>Mammalia</taxon>
        <taxon>Eutheria</taxon>
        <taxon>Euarchontoglires</taxon>
        <taxon>Glires</taxon>
        <taxon>Rodentia</taxon>
        <taxon>Myomorpha</taxon>
        <taxon>Muroidea</taxon>
        <taxon>Muridae</taxon>
        <taxon>Murinae</taxon>
        <taxon>Rattus</taxon>
    </lineage>
</organism>
<reference key="1">
    <citation type="journal article" date="2003" name="J. Biol. Chem.">
        <title>Mammalian Ric-8A (synembryn) is a heterotrimeric Galpha protein guanine nucleotide exchange factor.</title>
        <authorList>
            <person name="Tall G.G."/>
            <person name="Krumins A.M."/>
            <person name="Gilman A.G."/>
        </authorList>
    </citation>
    <scope>NUCLEOTIDE SEQUENCE [MRNA]</scope>
    <scope>INTERACTION WITH GNAS AND GNAQ</scope>
    <source>
        <strain>Sprague-Dawley</strain>
    </source>
</reference>
<reference key="2">
    <citation type="journal article" date="2012" name="Nat. Commun.">
        <title>Quantitative maps of protein phosphorylation sites across 14 different rat organs and tissues.</title>
        <authorList>
            <person name="Lundby A."/>
            <person name="Secher A."/>
            <person name="Lage K."/>
            <person name="Nordsborg N.B."/>
            <person name="Dmytriyev A."/>
            <person name="Lundby C."/>
            <person name="Olsen J.V."/>
        </authorList>
    </citation>
    <scope>PHOSPHORYLATION [LARGE SCALE ANALYSIS] AT SER-468 AND THR-473</scope>
    <scope>IDENTIFICATION BY MASS SPECTROMETRY [LARGE SCALE ANALYSIS]</scope>
</reference>
<comment type="function">
    <text evidence="1">Chaperone that specifically binds and folds nascent G(s) G-alpha proteins (GNAS and GNAL) prior to G protein heterotrimer formation, promoting their association with the plasma membrane. Also acts as a guanine nucleotide exchange factor (GEF) for G(s) proteins by stimulating exchange of bound GDP for free GTP. Acts as an important component for odorant signal transduction by mediating GNAL (G(olf)-alpha) folding, thereby promoting-dependent cAMP accumulation in olfactory sensory neurons.</text>
</comment>
<comment type="subunit">
    <text evidence="1 2">Interacts with GDP-bound G(s) G-alpha proteins GNAL and GNAS (PubMed:12509430). Does not interact with G-alpha proteins when they are in complex with subunits beta and gamma (By similarity).</text>
</comment>
<comment type="subcellular location">
    <subcellularLocation>
        <location evidence="1">Cytoplasm</location>
        <location evidence="1">Cell cortex</location>
    </subcellularLocation>
    <text evidence="1">Localizes to the cell cortex.</text>
</comment>
<comment type="similarity">
    <text evidence="3">Belongs to the synembryn family.</text>
</comment>
<accession>Q80ZG0</accession>
<evidence type="ECO:0000250" key="1">
    <source>
        <dbReference type="UniProtKB" id="Q80XE1"/>
    </source>
</evidence>
<evidence type="ECO:0000269" key="2">
    <source>
    </source>
</evidence>
<evidence type="ECO:0000305" key="3"/>
<evidence type="ECO:0007744" key="4">
    <source>
    </source>
</evidence>
<protein>
    <recommendedName>
        <fullName evidence="3">Chaperone Ric-8B</fullName>
    </recommendedName>
    <alternativeName>
        <fullName>Synembryn-B</fullName>
    </alternativeName>
</protein>